<sequence>MNITKIKERQKRIRNFSIIAHIDHGKSTLADRILEITGTIDKRVMQTQILDSMDLERERGITIKLNAVQILYQAQNKQQYIMHLIDTPGHVDFSYEVSRSLAACEGAILVIDAAQGIQSQTLANVYLAIENNLTIIPVLNKVDLPSADVPRVKGEIKDILNIDPEMAISASGKTGAGVIDILERIVTQISPPKGDPEAPLQALIFDSYFDPYKGVVPSIRIINGTVKKGDQILFMAGKHVYEVVEVGVYNPKQISKDYLAPGDVGYLTAAIKSINHVSVGDTITSNHKPAIQPLPGYKKMNSVVFCGLYPIEINKYEALKEALEKLKLSDSSLVFEPESSSALGLGFRTGFLGLLHMEIIQERISREFGVEVITTAPSVIYHVYNLKGEKILVDNPSKLPSPQMIERIEEPFIKATIICPEIYIGKVMELSQNKRGSLQNIEYIDQQRTKINYLLPFSETIYNYFDKLKSLTKGYASFDYEMENYRVSKLQKMDILLNGEVVDALSLIVHKDFAYSRGKTICETLKSFIPKQMFEIPIQAALGKKIIARETIKAMRKDVTAKLYGGDVTRKKKLLEKQKKGKKKMKTLGKVDLPQKAFLAILSAK</sequence>
<feature type="chain" id="PRO_1000117030" description="Elongation factor 4">
    <location>
        <begin position="1"/>
        <end position="605"/>
    </location>
</feature>
<feature type="domain" description="tr-type G">
    <location>
        <begin position="11"/>
        <end position="193"/>
    </location>
</feature>
<feature type="binding site" evidence="1">
    <location>
        <begin position="23"/>
        <end position="28"/>
    </location>
    <ligand>
        <name>GTP</name>
        <dbReference type="ChEBI" id="CHEBI:37565"/>
    </ligand>
</feature>
<feature type="binding site" evidence="1">
    <location>
        <begin position="140"/>
        <end position="143"/>
    </location>
    <ligand>
        <name>GTP</name>
        <dbReference type="ChEBI" id="CHEBI:37565"/>
    </ligand>
</feature>
<protein>
    <recommendedName>
        <fullName evidence="1">Elongation factor 4</fullName>
        <shortName evidence="1">EF-4</shortName>
        <ecNumber evidence="1">3.6.5.n1</ecNumber>
    </recommendedName>
    <alternativeName>
        <fullName evidence="1">Ribosomal back-translocase LepA</fullName>
    </alternativeName>
</protein>
<proteinExistence type="inferred from homology"/>
<evidence type="ECO:0000255" key="1">
    <source>
        <dbReference type="HAMAP-Rule" id="MF_00071"/>
    </source>
</evidence>
<organism>
    <name type="scientific">Phytoplasma australiense</name>
    <dbReference type="NCBI Taxonomy" id="59748"/>
    <lineage>
        <taxon>Bacteria</taxon>
        <taxon>Bacillati</taxon>
        <taxon>Mycoplasmatota</taxon>
        <taxon>Mollicutes</taxon>
        <taxon>Acholeplasmatales</taxon>
        <taxon>Acholeplasmataceae</taxon>
        <taxon>Candidatus Phytoplasma</taxon>
        <taxon>16SrXII (Stolbur group)</taxon>
    </lineage>
</organism>
<gene>
    <name evidence="1" type="primary">lepA</name>
    <name type="ordered locus">PA0222</name>
</gene>
<comment type="function">
    <text evidence="1">Required for accurate and efficient protein synthesis under certain stress conditions. May act as a fidelity factor of the translation reaction, by catalyzing a one-codon backward translocation of tRNAs on improperly translocated ribosomes. Back-translocation proceeds from a post-translocation (POST) complex to a pre-translocation (PRE) complex, thus giving elongation factor G a second chance to translocate the tRNAs correctly. Binds to ribosomes in a GTP-dependent manner.</text>
</comment>
<comment type="catalytic activity">
    <reaction evidence="1">
        <text>GTP + H2O = GDP + phosphate + H(+)</text>
        <dbReference type="Rhea" id="RHEA:19669"/>
        <dbReference type="ChEBI" id="CHEBI:15377"/>
        <dbReference type="ChEBI" id="CHEBI:15378"/>
        <dbReference type="ChEBI" id="CHEBI:37565"/>
        <dbReference type="ChEBI" id="CHEBI:43474"/>
        <dbReference type="ChEBI" id="CHEBI:58189"/>
        <dbReference type="EC" id="3.6.5.n1"/>
    </reaction>
</comment>
<comment type="subcellular location">
    <subcellularLocation>
        <location evidence="1">Cell membrane</location>
        <topology evidence="1">Peripheral membrane protein</topology>
        <orientation evidence="1">Cytoplasmic side</orientation>
    </subcellularLocation>
</comment>
<comment type="similarity">
    <text evidence="1">Belongs to the TRAFAC class translation factor GTPase superfamily. Classic translation factor GTPase family. LepA subfamily.</text>
</comment>
<name>LEPA_PHYAS</name>
<keyword id="KW-1003">Cell membrane</keyword>
<keyword id="KW-0342">GTP-binding</keyword>
<keyword id="KW-0378">Hydrolase</keyword>
<keyword id="KW-0472">Membrane</keyword>
<keyword id="KW-0547">Nucleotide-binding</keyword>
<keyword id="KW-0648">Protein biosynthesis</keyword>
<keyword id="KW-1185">Reference proteome</keyword>
<accession>B1V9C5</accession>
<dbReference type="EC" id="3.6.5.n1" evidence="1"/>
<dbReference type="EMBL" id="AM422018">
    <property type="protein sequence ID" value="CAM11557.1"/>
    <property type="molecule type" value="Genomic_DNA"/>
</dbReference>
<dbReference type="SMR" id="B1V9C5"/>
<dbReference type="STRING" id="59748.PA0222"/>
<dbReference type="KEGG" id="pal:PA0222"/>
<dbReference type="eggNOG" id="COG0481">
    <property type="taxonomic scope" value="Bacteria"/>
</dbReference>
<dbReference type="Proteomes" id="UP000008323">
    <property type="component" value="Chromosome"/>
</dbReference>
<dbReference type="GO" id="GO:0005886">
    <property type="term" value="C:plasma membrane"/>
    <property type="evidence" value="ECO:0007669"/>
    <property type="project" value="UniProtKB-SubCell"/>
</dbReference>
<dbReference type="GO" id="GO:0005525">
    <property type="term" value="F:GTP binding"/>
    <property type="evidence" value="ECO:0007669"/>
    <property type="project" value="UniProtKB-UniRule"/>
</dbReference>
<dbReference type="GO" id="GO:0003924">
    <property type="term" value="F:GTPase activity"/>
    <property type="evidence" value="ECO:0007669"/>
    <property type="project" value="UniProtKB-UniRule"/>
</dbReference>
<dbReference type="GO" id="GO:0043022">
    <property type="term" value="F:ribosome binding"/>
    <property type="evidence" value="ECO:0007669"/>
    <property type="project" value="UniProtKB-UniRule"/>
</dbReference>
<dbReference type="GO" id="GO:0003746">
    <property type="term" value="F:translation elongation factor activity"/>
    <property type="evidence" value="ECO:0007669"/>
    <property type="project" value="UniProtKB-UniRule"/>
</dbReference>
<dbReference type="GO" id="GO:0045727">
    <property type="term" value="P:positive regulation of translation"/>
    <property type="evidence" value="ECO:0007669"/>
    <property type="project" value="UniProtKB-UniRule"/>
</dbReference>
<dbReference type="CDD" id="cd16260">
    <property type="entry name" value="EF4_III"/>
    <property type="match status" value="1"/>
</dbReference>
<dbReference type="CDD" id="cd01890">
    <property type="entry name" value="LepA"/>
    <property type="match status" value="1"/>
</dbReference>
<dbReference type="CDD" id="cd03709">
    <property type="entry name" value="lepA_C"/>
    <property type="match status" value="1"/>
</dbReference>
<dbReference type="FunFam" id="3.40.50.300:FF:000078">
    <property type="entry name" value="Elongation factor 4"/>
    <property type="match status" value="1"/>
</dbReference>
<dbReference type="FunFam" id="2.40.30.10:FF:000015">
    <property type="entry name" value="Translation factor GUF1, mitochondrial"/>
    <property type="match status" value="1"/>
</dbReference>
<dbReference type="FunFam" id="3.30.70.240:FF:000007">
    <property type="entry name" value="Translation factor GUF1, mitochondrial"/>
    <property type="match status" value="1"/>
</dbReference>
<dbReference type="FunFam" id="3.30.70.2570:FF:000001">
    <property type="entry name" value="Translation factor GUF1, mitochondrial"/>
    <property type="match status" value="1"/>
</dbReference>
<dbReference type="FunFam" id="3.30.70.870:FF:000004">
    <property type="entry name" value="Translation factor GUF1, mitochondrial"/>
    <property type="match status" value="1"/>
</dbReference>
<dbReference type="Gene3D" id="3.30.70.240">
    <property type="match status" value="1"/>
</dbReference>
<dbReference type="Gene3D" id="3.30.70.2570">
    <property type="entry name" value="Elongation factor 4, C-terminal domain"/>
    <property type="match status" value="1"/>
</dbReference>
<dbReference type="Gene3D" id="3.30.70.870">
    <property type="entry name" value="Elongation Factor G (Translational Gtpase), domain 3"/>
    <property type="match status" value="1"/>
</dbReference>
<dbReference type="Gene3D" id="3.40.50.300">
    <property type="entry name" value="P-loop containing nucleotide triphosphate hydrolases"/>
    <property type="match status" value="1"/>
</dbReference>
<dbReference type="Gene3D" id="2.40.30.10">
    <property type="entry name" value="Translation factors"/>
    <property type="match status" value="1"/>
</dbReference>
<dbReference type="HAMAP" id="MF_00071">
    <property type="entry name" value="LepA"/>
    <property type="match status" value="1"/>
</dbReference>
<dbReference type="InterPro" id="IPR006297">
    <property type="entry name" value="EF-4"/>
</dbReference>
<dbReference type="InterPro" id="IPR035647">
    <property type="entry name" value="EFG_III/V"/>
</dbReference>
<dbReference type="InterPro" id="IPR000640">
    <property type="entry name" value="EFG_V-like"/>
</dbReference>
<dbReference type="InterPro" id="IPR004161">
    <property type="entry name" value="EFTu-like_2"/>
</dbReference>
<dbReference type="InterPro" id="IPR031157">
    <property type="entry name" value="G_TR_CS"/>
</dbReference>
<dbReference type="InterPro" id="IPR038363">
    <property type="entry name" value="LepA_C_sf"/>
</dbReference>
<dbReference type="InterPro" id="IPR013842">
    <property type="entry name" value="LepA_CTD"/>
</dbReference>
<dbReference type="InterPro" id="IPR035654">
    <property type="entry name" value="LepA_IV"/>
</dbReference>
<dbReference type="InterPro" id="IPR027417">
    <property type="entry name" value="P-loop_NTPase"/>
</dbReference>
<dbReference type="InterPro" id="IPR005225">
    <property type="entry name" value="Small_GTP-bd"/>
</dbReference>
<dbReference type="InterPro" id="IPR000795">
    <property type="entry name" value="T_Tr_GTP-bd_dom"/>
</dbReference>
<dbReference type="InterPro" id="IPR009000">
    <property type="entry name" value="Transl_B-barrel_sf"/>
</dbReference>
<dbReference type="NCBIfam" id="TIGR01393">
    <property type="entry name" value="lepA"/>
    <property type="match status" value="1"/>
</dbReference>
<dbReference type="NCBIfam" id="TIGR00231">
    <property type="entry name" value="small_GTP"/>
    <property type="match status" value="1"/>
</dbReference>
<dbReference type="PANTHER" id="PTHR43512:SF4">
    <property type="entry name" value="TRANSLATION FACTOR GUF1 HOMOLOG, CHLOROPLASTIC"/>
    <property type="match status" value="1"/>
</dbReference>
<dbReference type="PANTHER" id="PTHR43512">
    <property type="entry name" value="TRANSLATION FACTOR GUF1-RELATED"/>
    <property type="match status" value="1"/>
</dbReference>
<dbReference type="Pfam" id="PF00679">
    <property type="entry name" value="EFG_C"/>
    <property type="match status" value="1"/>
</dbReference>
<dbReference type="Pfam" id="PF00009">
    <property type="entry name" value="GTP_EFTU"/>
    <property type="match status" value="1"/>
</dbReference>
<dbReference type="Pfam" id="PF03144">
    <property type="entry name" value="GTP_EFTU_D2"/>
    <property type="match status" value="1"/>
</dbReference>
<dbReference type="Pfam" id="PF06421">
    <property type="entry name" value="LepA_C"/>
    <property type="match status" value="1"/>
</dbReference>
<dbReference type="PRINTS" id="PR00315">
    <property type="entry name" value="ELONGATNFCT"/>
</dbReference>
<dbReference type="SMART" id="SM00838">
    <property type="entry name" value="EFG_C"/>
    <property type="match status" value="1"/>
</dbReference>
<dbReference type="SUPFAM" id="SSF54980">
    <property type="entry name" value="EF-G C-terminal domain-like"/>
    <property type="match status" value="2"/>
</dbReference>
<dbReference type="SUPFAM" id="SSF52540">
    <property type="entry name" value="P-loop containing nucleoside triphosphate hydrolases"/>
    <property type="match status" value="1"/>
</dbReference>
<dbReference type="SUPFAM" id="SSF50447">
    <property type="entry name" value="Translation proteins"/>
    <property type="match status" value="1"/>
</dbReference>
<dbReference type="PROSITE" id="PS00301">
    <property type="entry name" value="G_TR_1"/>
    <property type="match status" value="1"/>
</dbReference>
<dbReference type="PROSITE" id="PS51722">
    <property type="entry name" value="G_TR_2"/>
    <property type="match status" value="1"/>
</dbReference>
<reference key="1">
    <citation type="journal article" date="2008" name="J. Bacteriol.">
        <title>Comparative genome analysis of 'Candidatus Phytoplasma australiense' (subgroup tuf-Australia I; rp-A) and 'Ca. Phytoplasma asteris' strains OY-M and AY-WB.</title>
        <authorList>
            <person name="Tran-Nguyen L.T."/>
            <person name="Kube M."/>
            <person name="Schneider B."/>
            <person name="Reinhardt R."/>
            <person name="Gibb K.S."/>
        </authorList>
    </citation>
    <scope>NUCLEOTIDE SEQUENCE [LARGE SCALE GENOMIC DNA]</scope>
</reference>